<accession>Q8BU91</accession>
<accession>Q8BVC3</accession>
<protein>
    <recommendedName>
        <fullName evidence="7">Solute carrier family 26 member 9</fullName>
    </recommendedName>
    <alternativeName>
        <fullName>Anion transporter/exchanger protein 9</fullName>
    </alternativeName>
</protein>
<name>S26A9_MOUSE</name>
<organism>
    <name type="scientific">Mus musculus</name>
    <name type="common">Mouse</name>
    <dbReference type="NCBI Taxonomy" id="10090"/>
    <lineage>
        <taxon>Eukaryota</taxon>
        <taxon>Metazoa</taxon>
        <taxon>Chordata</taxon>
        <taxon>Craniata</taxon>
        <taxon>Vertebrata</taxon>
        <taxon>Euteleostomi</taxon>
        <taxon>Mammalia</taxon>
        <taxon>Eutheria</taxon>
        <taxon>Euarchontoglires</taxon>
        <taxon>Glires</taxon>
        <taxon>Rodentia</taxon>
        <taxon>Myomorpha</taxon>
        <taxon>Muroidea</taxon>
        <taxon>Muridae</taxon>
        <taxon>Murinae</taxon>
        <taxon>Mus</taxon>
        <taxon>Mus</taxon>
    </lineage>
</organism>
<proteinExistence type="evidence at protein level"/>
<reference key="1">
    <citation type="journal article" date="2006" name="Novartis Found. Symp.">
        <title>Physiology of electrogenic SLC26 paralogues.</title>
        <authorList>
            <person name="Romero M.F."/>
            <person name="Chang M.H."/>
            <person name="Plata C."/>
            <person name="Zandi-Nejad K."/>
            <person name="Mercado A."/>
            <person name="Broumand V."/>
            <person name="Sussman C.R."/>
            <person name="Mount D.B."/>
        </authorList>
    </citation>
    <scope>NUCLEOTIDE SEQUENCE [MRNA]</scope>
    <scope>FUNCTION</scope>
    <source>
        <strain>C57BL/6J</strain>
    </source>
</reference>
<reference key="2">
    <citation type="journal article" date="2005" name="Science">
        <title>The transcriptional landscape of the mammalian genome.</title>
        <authorList>
            <person name="Carninci P."/>
            <person name="Kasukawa T."/>
            <person name="Katayama S."/>
            <person name="Gough J."/>
            <person name="Frith M.C."/>
            <person name="Maeda N."/>
            <person name="Oyama R."/>
            <person name="Ravasi T."/>
            <person name="Lenhard B."/>
            <person name="Wells C."/>
            <person name="Kodzius R."/>
            <person name="Shimokawa K."/>
            <person name="Bajic V.B."/>
            <person name="Brenner S.E."/>
            <person name="Batalov S."/>
            <person name="Forrest A.R."/>
            <person name="Zavolan M."/>
            <person name="Davis M.J."/>
            <person name="Wilming L.G."/>
            <person name="Aidinis V."/>
            <person name="Allen J.E."/>
            <person name="Ambesi-Impiombato A."/>
            <person name="Apweiler R."/>
            <person name="Aturaliya R.N."/>
            <person name="Bailey T.L."/>
            <person name="Bansal M."/>
            <person name="Baxter L."/>
            <person name="Beisel K.W."/>
            <person name="Bersano T."/>
            <person name="Bono H."/>
            <person name="Chalk A.M."/>
            <person name="Chiu K.P."/>
            <person name="Choudhary V."/>
            <person name="Christoffels A."/>
            <person name="Clutterbuck D.R."/>
            <person name="Crowe M.L."/>
            <person name="Dalla E."/>
            <person name="Dalrymple B.P."/>
            <person name="de Bono B."/>
            <person name="Della Gatta G."/>
            <person name="di Bernardo D."/>
            <person name="Down T."/>
            <person name="Engstrom P."/>
            <person name="Fagiolini M."/>
            <person name="Faulkner G."/>
            <person name="Fletcher C.F."/>
            <person name="Fukushima T."/>
            <person name="Furuno M."/>
            <person name="Futaki S."/>
            <person name="Gariboldi M."/>
            <person name="Georgii-Hemming P."/>
            <person name="Gingeras T.R."/>
            <person name="Gojobori T."/>
            <person name="Green R.E."/>
            <person name="Gustincich S."/>
            <person name="Harbers M."/>
            <person name="Hayashi Y."/>
            <person name="Hensch T.K."/>
            <person name="Hirokawa N."/>
            <person name="Hill D."/>
            <person name="Huminiecki L."/>
            <person name="Iacono M."/>
            <person name="Ikeo K."/>
            <person name="Iwama A."/>
            <person name="Ishikawa T."/>
            <person name="Jakt M."/>
            <person name="Kanapin A."/>
            <person name="Katoh M."/>
            <person name="Kawasawa Y."/>
            <person name="Kelso J."/>
            <person name="Kitamura H."/>
            <person name="Kitano H."/>
            <person name="Kollias G."/>
            <person name="Krishnan S.P."/>
            <person name="Kruger A."/>
            <person name="Kummerfeld S.K."/>
            <person name="Kurochkin I.V."/>
            <person name="Lareau L.F."/>
            <person name="Lazarevic D."/>
            <person name="Lipovich L."/>
            <person name="Liu J."/>
            <person name="Liuni S."/>
            <person name="McWilliam S."/>
            <person name="Madan Babu M."/>
            <person name="Madera M."/>
            <person name="Marchionni L."/>
            <person name="Matsuda H."/>
            <person name="Matsuzawa S."/>
            <person name="Miki H."/>
            <person name="Mignone F."/>
            <person name="Miyake S."/>
            <person name="Morris K."/>
            <person name="Mottagui-Tabar S."/>
            <person name="Mulder N."/>
            <person name="Nakano N."/>
            <person name="Nakauchi H."/>
            <person name="Ng P."/>
            <person name="Nilsson R."/>
            <person name="Nishiguchi S."/>
            <person name="Nishikawa S."/>
            <person name="Nori F."/>
            <person name="Ohara O."/>
            <person name="Okazaki Y."/>
            <person name="Orlando V."/>
            <person name="Pang K.C."/>
            <person name="Pavan W.J."/>
            <person name="Pavesi G."/>
            <person name="Pesole G."/>
            <person name="Petrovsky N."/>
            <person name="Piazza S."/>
            <person name="Reed J."/>
            <person name="Reid J.F."/>
            <person name="Ring B.Z."/>
            <person name="Ringwald M."/>
            <person name="Rost B."/>
            <person name="Ruan Y."/>
            <person name="Salzberg S.L."/>
            <person name="Sandelin A."/>
            <person name="Schneider C."/>
            <person name="Schoenbach C."/>
            <person name="Sekiguchi K."/>
            <person name="Semple C.A."/>
            <person name="Seno S."/>
            <person name="Sessa L."/>
            <person name="Sheng Y."/>
            <person name="Shibata Y."/>
            <person name="Shimada H."/>
            <person name="Shimada K."/>
            <person name="Silva D."/>
            <person name="Sinclair B."/>
            <person name="Sperling S."/>
            <person name="Stupka E."/>
            <person name="Sugiura K."/>
            <person name="Sultana R."/>
            <person name="Takenaka Y."/>
            <person name="Taki K."/>
            <person name="Tammoja K."/>
            <person name="Tan S.L."/>
            <person name="Tang S."/>
            <person name="Taylor M.S."/>
            <person name="Tegner J."/>
            <person name="Teichmann S.A."/>
            <person name="Ueda H.R."/>
            <person name="van Nimwegen E."/>
            <person name="Verardo R."/>
            <person name="Wei C.L."/>
            <person name="Yagi K."/>
            <person name="Yamanishi H."/>
            <person name="Zabarovsky E."/>
            <person name="Zhu S."/>
            <person name="Zimmer A."/>
            <person name="Hide W."/>
            <person name="Bult C."/>
            <person name="Grimmond S.M."/>
            <person name="Teasdale R.D."/>
            <person name="Liu E.T."/>
            <person name="Brusic V."/>
            <person name="Quackenbush J."/>
            <person name="Wahlestedt C."/>
            <person name="Mattick J.S."/>
            <person name="Hume D.A."/>
            <person name="Kai C."/>
            <person name="Sasaki D."/>
            <person name="Tomaru Y."/>
            <person name="Fukuda S."/>
            <person name="Kanamori-Katayama M."/>
            <person name="Suzuki M."/>
            <person name="Aoki J."/>
            <person name="Arakawa T."/>
            <person name="Iida J."/>
            <person name="Imamura K."/>
            <person name="Itoh M."/>
            <person name="Kato T."/>
            <person name="Kawaji H."/>
            <person name="Kawagashira N."/>
            <person name="Kawashima T."/>
            <person name="Kojima M."/>
            <person name="Kondo S."/>
            <person name="Konno H."/>
            <person name="Nakano K."/>
            <person name="Ninomiya N."/>
            <person name="Nishio T."/>
            <person name="Okada M."/>
            <person name="Plessy C."/>
            <person name="Shibata K."/>
            <person name="Shiraki T."/>
            <person name="Suzuki S."/>
            <person name="Tagami M."/>
            <person name="Waki K."/>
            <person name="Watahiki A."/>
            <person name="Okamura-Oho Y."/>
            <person name="Suzuki H."/>
            <person name="Kawai J."/>
            <person name="Hayashizaki Y."/>
        </authorList>
    </citation>
    <scope>NUCLEOTIDE SEQUENCE [LARGE SCALE MRNA]</scope>
    <source>
        <strain>C57BL/6J</strain>
        <tissue>Cecum</tissue>
        <tissue>Lung</tissue>
    </source>
</reference>
<reference key="3">
    <citation type="journal article" date="2005" name="Am. J. Physiol.">
        <title>SLC26A9 is expressed in gastric surface epithelial cells, mediates Cl-/HCO3- exchange, and is inhibited by NH4+.</title>
        <authorList>
            <person name="Xu J."/>
            <person name="Henriksnas J."/>
            <person name="Barone S."/>
            <person name="Witte D."/>
            <person name="Shull G.E."/>
            <person name="Forte J.G."/>
            <person name="Holm L."/>
            <person name="Soleimani M."/>
        </authorList>
    </citation>
    <scope>FUNCTION</scope>
    <scope>TRANSPORTER ACTIVITY</scope>
    <scope>TISSUE SPECIFICITY</scope>
    <scope>ACTIVITY REGULATION</scope>
</reference>
<reference evidence="9 10" key="4">
    <citation type="journal article" date="2019" name="Elife">
        <title>Cryo-EM structures and functional characterization of murine Slc26a9 reveal mechanism of uncoupled chloride transport.</title>
        <authorList>
            <person name="Walter J.D."/>
            <person name="Sawicka M."/>
            <person name="Dutzler R."/>
        </authorList>
    </citation>
    <scope>STRUCTURE BY ELECTRON MICROSCOPY (3.96 ANGSTROMS) OF 1-557 AND 661-744</scope>
    <scope>FUNCTION</scope>
    <scope>MUTAGENESIS OF GLN-88; PHE-128; ARG-205; LYS-270; LYS-358; SER-392 AND LYS-443</scope>
    <scope>TOPOLOGY</scope>
    <scope>TRANSMEMBRANE DOMAINS</scope>
</reference>
<feature type="chain" id="PRO_0000324493" description="Solute carrier family 26 member 9">
    <location>
        <begin position="1"/>
        <end position="790"/>
    </location>
</feature>
<feature type="topological domain" description="Cytoplasmic" evidence="5">
    <location>
        <begin position="1"/>
        <end position="70"/>
    </location>
</feature>
<feature type="transmembrane region" description="Helical" evidence="5">
    <location>
        <begin position="71"/>
        <end position="96"/>
    </location>
</feature>
<feature type="topological domain" description="Extracellular" evidence="5">
    <location>
        <begin position="97"/>
        <end position="100"/>
    </location>
</feature>
<feature type="transmembrane region" description="Helical" evidence="5">
    <location>
        <begin position="101"/>
        <end position="109"/>
    </location>
</feature>
<feature type="topological domain" description="Cytoplasmic" evidence="5">
    <location>
        <begin position="110"/>
        <end position="129"/>
    </location>
</feature>
<feature type="transmembrane region" description="Helical" evidence="5">
    <location>
        <begin position="130"/>
        <end position="142"/>
    </location>
</feature>
<feature type="topological domain" description="Extracellular" evidence="5">
    <location>
        <begin position="143"/>
        <end position="162"/>
    </location>
</feature>
<feature type="transmembrane region" description="Helical" evidence="5">
    <location>
        <begin position="163"/>
        <end position="191"/>
    </location>
</feature>
<feature type="topological domain" description="Cytoplasmic" evidence="5">
    <location>
        <begin position="192"/>
        <end position="201"/>
    </location>
</feature>
<feature type="transmembrane region" description="Helical" evidence="5">
    <location>
        <begin position="202"/>
        <end position="224"/>
    </location>
</feature>
<feature type="topological domain" description="Extracellular" evidence="5">
    <location>
        <begin position="225"/>
        <end position="237"/>
    </location>
</feature>
<feature type="intramembrane region" description="Helical" evidence="5">
    <location>
        <begin position="238"/>
        <end position="246"/>
    </location>
</feature>
<feature type="topological domain" description="Extracellular" evidence="5">
    <location>
        <begin position="247"/>
        <end position="254"/>
    </location>
</feature>
<feature type="transmembrane region" description="Helical" evidence="5">
    <location>
        <begin position="255"/>
        <end position="275"/>
    </location>
</feature>
<feature type="topological domain" description="Cytoplasmic" evidence="5">
    <location>
        <begin position="276"/>
        <end position="286"/>
    </location>
</feature>
<feature type="transmembrane region" description="Helical" evidence="5">
    <location>
        <begin position="287"/>
        <end position="299"/>
    </location>
</feature>
<feature type="topological domain" description="Extracellular" evidence="5">
    <location>
        <begin position="300"/>
        <end position="334"/>
    </location>
</feature>
<feature type="transmembrane region" description="Helical" evidence="5">
    <location>
        <begin position="335"/>
        <end position="358"/>
    </location>
</feature>
<feature type="topological domain" description="Cytoplasmic" evidence="5">
    <location>
        <begin position="359"/>
        <end position="365"/>
    </location>
</feature>
<feature type="transmembrane region" description="Helical" evidence="5">
    <location>
        <begin position="366"/>
        <end position="379"/>
    </location>
</feature>
<feature type="topological domain" description="Extracellular" evidence="5">
    <location>
        <begin position="380"/>
        <end position="390"/>
    </location>
</feature>
<feature type="transmembrane region" description="Helical" evidence="5">
    <location>
        <begin position="391"/>
        <end position="400"/>
    </location>
</feature>
<feature type="topological domain" description="Cytoplasmic" evidence="5">
    <location>
        <begin position="401"/>
        <end position="405"/>
    </location>
</feature>
<feature type="transmembrane region" description="Helical" evidence="5">
    <location>
        <begin position="406"/>
        <end position="419"/>
    </location>
</feature>
<feature type="topological domain" description="Extracellular" evidence="5">
    <location>
        <begin position="420"/>
        <end position="431"/>
    </location>
</feature>
<feature type="transmembrane region" description="Helical" evidence="5">
    <location>
        <begin position="432"/>
        <end position="457"/>
    </location>
</feature>
<feature type="topological domain" description="Cytoplasmic" evidence="5">
    <location>
        <begin position="458"/>
        <end position="461"/>
    </location>
</feature>
<feature type="transmembrane region" description="Helical" evidence="5">
    <location>
        <begin position="462"/>
        <end position="476"/>
    </location>
</feature>
<feature type="topological domain" description="Extracellular" evidence="5">
    <location>
        <begin position="477"/>
        <end position="479"/>
    </location>
</feature>
<feature type="transmembrane region" description="Helical" evidence="5">
    <location>
        <begin position="480"/>
        <end position="498"/>
    </location>
</feature>
<feature type="topological domain" description="Cytoplasmic" evidence="5">
    <location>
        <begin position="499"/>
        <end position="790"/>
    </location>
</feature>
<feature type="domain" description="STAS" evidence="2">
    <location>
        <begin position="519"/>
        <end position="737"/>
    </location>
</feature>
<feature type="mutagenesis site" description="Alters chloride anion transport behavior." evidence="5">
    <original>Q</original>
    <variation>A</variation>
    <variation>E</variation>
    <location>
        <position position="88"/>
    </location>
</feature>
<feature type="mutagenesis site" description="Alters chloride anion transport behavior." evidence="5">
    <original>F</original>
    <variation>A</variation>
    <location>
        <position position="128"/>
    </location>
</feature>
<feature type="mutagenesis site" description="Has very little effect on anion transport." evidence="5">
    <original>R</original>
    <variation>E</variation>
    <location>
        <position position="205"/>
    </location>
</feature>
<feature type="mutagenesis site" description="Impairs outward anion transport properties." evidence="5">
    <original>K</original>
    <variation>E</variation>
    <location>
        <position position="270"/>
    </location>
</feature>
<feature type="mutagenesis site" description="Has very little effect on anion transport." evidence="5">
    <original>K</original>
    <variation>E</variation>
    <location>
        <position position="358"/>
    </location>
</feature>
<feature type="mutagenesis site" description="Alters chloride anion transport behavior." evidence="5">
    <original>S</original>
    <variation>A</variation>
    <location>
        <position position="392"/>
    </location>
</feature>
<feature type="mutagenesis site" description="Impairs outward anion transport properties." evidence="5">
    <original>K</original>
    <variation>E</variation>
    <location>
        <position position="443"/>
    </location>
</feature>
<feature type="sequence conflict" description="In Ref. 1; AAK54448 and 2; BAC37482." evidence="7" ref="1 2">
    <original>G</original>
    <variation>D</variation>
    <location>
        <position position="332"/>
    </location>
</feature>
<feature type="sequence conflict" description="In Ref. 1; AAK54448 and 2; BAC37482." evidence="7" ref="1 2">
    <original>L</original>
    <variation>F</variation>
    <location>
        <position position="540"/>
    </location>
</feature>
<evidence type="ECO:0000250" key="1">
    <source>
        <dbReference type="UniProtKB" id="Q7LBE3"/>
    </source>
</evidence>
<evidence type="ECO:0000255" key="2">
    <source>
        <dbReference type="PROSITE-ProRule" id="PRU00198"/>
    </source>
</evidence>
<evidence type="ECO:0000269" key="3">
    <source>
    </source>
</evidence>
<evidence type="ECO:0000269" key="4">
    <source>
    </source>
</evidence>
<evidence type="ECO:0000269" key="5">
    <source>
    </source>
</evidence>
<evidence type="ECO:0000303" key="6">
    <source>
    </source>
</evidence>
<evidence type="ECO:0000305" key="7"/>
<evidence type="ECO:0000312" key="8">
    <source>
        <dbReference type="MGI" id="MGI:2444594"/>
    </source>
</evidence>
<evidence type="ECO:0007744" key="9">
    <source>
        <dbReference type="PDB" id="6RTC"/>
    </source>
</evidence>
<evidence type="ECO:0007744" key="10">
    <source>
        <dbReference type="PDB" id="6RTF"/>
    </source>
</evidence>
<keyword id="KW-0002">3D-structure</keyword>
<keyword id="KW-1003">Cell membrane</keyword>
<keyword id="KW-0406">Ion transport</keyword>
<keyword id="KW-0472">Membrane</keyword>
<keyword id="KW-1185">Reference proteome</keyword>
<keyword id="KW-0812">Transmembrane</keyword>
<keyword id="KW-1133">Transmembrane helix</keyword>
<keyword id="KW-0813">Transport</keyword>
<sequence>MNQPRPRYVVDRAAYSLSLFDDEFEKKDRAYPVGEKLRNTFRCSSAKFKAFVFGLLPVLSWLPKYKIKDYIIPDLLGGLSGGCIQVPQGMAFALLANLPAVNGLYSSFFPLLTYFFLGGIHQMVPGTFAVISILVGNICLQLAPESKFQIFNNVTNETYVDTAAMEAERLHVSATLACLTAVIQMALGFMQFGFVAIYLSESFIRGFMTAAGLQILISVLKYIFGLTIPSYTGPGSIVFTFIDICKNLPHTNIASLIFALVSGVFLVLVKELNARYMHKIHFPIPTEMIVVVVATAISGSCKMPKKYHMQIVGEIRQGFPTPVAPMVSQWKGMVGTAFSLAIVGYVINLAMGRTLASKHGYDVDSNQEMIALGCSNFFGSFFKIHVICCALSVTLAVDGAGGKSQVASLCVSLVVMITMLVLGSYLYPLPKAVLGALIAVNLKNSLKQLTDPYYLWRKSKLDCCVWVVSFLSSFFLSLPYGVAVGVAFSILVVIFQTQFRNGSTLAQVMDTDIYVNPKTYNRAQEIAGVKIVTYCSPLYLANSEIFRQKVIAKTGMDPQKVLLAKQKYLRKQEKRTAIPTQQRKSLFMKTKTVSLQELQQDFESAPSTDPNNNQAPAAEAHISYITFSPDASTAAACELPASTRSPQEASDTLASVPPFVTFHTLILDMSGVSFVDLMGIKALAKLSSTYEKIGVQIFLVNIHAQVYNDISHGGVFEDGCVQRSHVFPSIHDAVLFAQANAREAPDRNFHGAPGDTEFSLYDSEEEGPSYWDLEQEMFGTMFHTETLTAL</sequence>
<gene>
    <name evidence="6 8" type="primary">Slc26a9</name>
</gene>
<comment type="function">
    <text evidence="3 4 5">Ion transporter that can act both as an ion channel and anion exchanger (PubMed:15800055, PubMed:17120765, PubMed:31339488). Mainly acts as a chloride channel, which mediate uncoupled chloride anion transport in an alternate-access mechanism where a saturable binding site is alternately exposed to either one or the other side of the membrane (PubMed:31339488). Also acts as a DIDS- and thiosulfate- sensitive anion exchanger the exchange of chloride for bicarbonate ions across the cell membrane (PubMed:15800055).</text>
</comment>
<comment type="catalytic activity">
    <reaction evidence="5">
        <text>chloride(in) = chloride(out)</text>
        <dbReference type="Rhea" id="RHEA:29823"/>
        <dbReference type="ChEBI" id="CHEBI:17996"/>
    </reaction>
</comment>
<comment type="catalytic activity">
    <reaction evidence="3">
        <text>hydrogencarbonate(in) + chloride(out) = hydrogencarbonate(out) + chloride(in)</text>
        <dbReference type="Rhea" id="RHEA:72363"/>
        <dbReference type="ChEBI" id="CHEBI:17544"/>
        <dbReference type="ChEBI" id="CHEBI:17996"/>
    </reaction>
</comment>
<comment type="activity regulation">
    <text evidence="3">Inhibited by ammonium and thiosulfate.</text>
</comment>
<comment type="subunit">
    <text evidence="5">Homodimer.</text>
</comment>
<comment type="interaction">
    <interactant intactId="EBI-27096086">
        <id>Q8BU91</id>
    </interactant>
    <interactant intactId="EBI-27096086">
        <id>Q8BU91</id>
        <label>Slc26a9</label>
    </interactant>
    <organismsDiffer>false</organismsDiffer>
    <experiments>2</experiments>
</comment>
<comment type="subcellular location">
    <subcellularLocation>
        <location evidence="5">Cell membrane</location>
        <topology evidence="5">Multi-pass membrane protein</topology>
    </subcellularLocation>
    <subcellularLocation>
        <location evidence="1">Endomembrane system</location>
        <topology evidence="5">Multi-pass membrane protein</topology>
    </subcellularLocation>
    <text evidence="1">Localization to the cell membrane is inhibited by WNK kinases (WNK1, WNK2, WNK3 or WNK4) in a kinase-independent mechanism.</text>
</comment>
<comment type="tissue specificity">
    <text evidence="3">Expressed in stomach and trachea. Abundantly expressed in the apical domain of the surface epithelial cells and the deep cells in the gastric gland. Also expressed in heart, brain, lung and liver.</text>
</comment>
<comment type="similarity">
    <text evidence="7">Belongs to the SLC26A/SulP transporter (TC 2.A.53) family.</text>
</comment>
<dbReference type="EMBL" id="AY034145">
    <property type="protein sequence ID" value="AAK54448.1"/>
    <property type="molecule type" value="mRNA"/>
</dbReference>
<dbReference type="EMBL" id="AK078966">
    <property type="protein sequence ID" value="BAC37482.1"/>
    <property type="molecule type" value="mRNA"/>
</dbReference>
<dbReference type="EMBL" id="AK086815">
    <property type="protein sequence ID" value="BAC39749.1"/>
    <property type="molecule type" value="mRNA"/>
</dbReference>
<dbReference type="CCDS" id="CCDS15273.1"/>
<dbReference type="RefSeq" id="NP_796217.2">
    <property type="nucleotide sequence ID" value="NM_177243.4"/>
</dbReference>
<dbReference type="RefSeq" id="XP_006529763.1">
    <property type="nucleotide sequence ID" value="XM_006529700.2"/>
</dbReference>
<dbReference type="PDB" id="6RTC">
    <property type="method" value="EM"/>
    <property type="resolution" value="3.96 A"/>
    <property type="chains" value="A/B=1-557, A/B=661-744"/>
</dbReference>
<dbReference type="PDB" id="6RTF">
    <property type="method" value="EM"/>
    <property type="resolution" value="7.77 A"/>
    <property type="chains" value="A/B=1-557, A/B=661-744"/>
</dbReference>
<dbReference type="PDBsum" id="6RTC"/>
<dbReference type="PDBsum" id="6RTF"/>
<dbReference type="SMR" id="Q8BU91"/>
<dbReference type="FunCoup" id="Q8BU91">
    <property type="interactions" value="25"/>
</dbReference>
<dbReference type="STRING" id="10090.ENSMUSP00000036916"/>
<dbReference type="TCDB" id="2.A.53.2.10">
    <property type="family name" value="the sulfate permease (sulp) family"/>
</dbReference>
<dbReference type="PhosphoSitePlus" id="Q8BU91"/>
<dbReference type="PaxDb" id="10090-ENSMUSP00000036916"/>
<dbReference type="ProteomicsDB" id="253378"/>
<dbReference type="DNASU" id="320718"/>
<dbReference type="GeneID" id="320718"/>
<dbReference type="KEGG" id="mmu:320718"/>
<dbReference type="UCSC" id="uc007cns.1">
    <property type="organism name" value="mouse"/>
</dbReference>
<dbReference type="AGR" id="MGI:2444594"/>
<dbReference type="CTD" id="115019"/>
<dbReference type="MGI" id="MGI:2444594">
    <property type="gene designation" value="Slc26a9"/>
</dbReference>
<dbReference type="eggNOG" id="KOG0236">
    <property type="taxonomic scope" value="Eukaryota"/>
</dbReference>
<dbReference type="InParanoid" id="Q8BU91"/>
<dbReference type="OrthoDB" id="288203at2759"/>
<dbReference type="PhylomeDB" id="Q8BU91"/>
<dbReference type="TreeFam" id="TF313784"/>
<dbReference type="Reactome" id="R-MMU-427601">
    <property type="pathway name" value="Multifunctional anion exchangers"/>
</dbReference>
<dbReference type="BioGRID-ORCS" id="320718">
    <property type="hits" value="2 hits in 77 CRISPR screens"/>
</dbReference>
<dbReference type="PRO" id="PR:Q8BU91"/>
<dbReference type="Proteomes" id="UP000000589">
    <property type="component" value="Unplaced"/>
</dbReference>
<dbReference type="RNAct" id="Q8BU91">
    <property type="molecule type" value="protein"/>
</dbReference>
<dbReference type="GO" id="GO:0016324">
    <property type="term" value="C:apical plasma membrane"/>
    <property type="evidence" value="ECO:0000314"/>
    <property type="project" value="MGI"/>
</dbReference>
<dbReference type="GO" id="GO:0005789">
    <property type="term" value="C:endoplasmic reticulum membrane"/>
    <property type="evidence" value="ECO:0000250"/>
    <property type="project" value="UniProtKB"/>
</dbReference>
<dbReference type="GO" id="GO:0010008">
    <property type="term" value="C:endosome membrane"/>
    <property type="evidence" value="ECO:0000250"/>
    <property type="project" value="UniProtKB"/>
</dbReference>
<dbReference type="GO" id="GO:0000139">
    <property type="term" value="C:Golgi membrane"/>
    <property type="evidence" value="ECO:0000250"/>
    <property type="project" value="UniProtKB"/>
</dbReference>
<dbReference type="GO" id="GO:0015106">
    <property type="term" value="F:bicarbonate transmembrane transporter activity"/>
    <property type="evidence" value="ECO:0000314"/>
    <property type="project" value="MGI"/>
</dbReference>
<dbReference type="GO" id="GO:0005254">
    <property type="term" value="F:chloride channel activity"/>
    <property type="evidence" value="ECO:0000314"/>
    <property type="project" value="GO_Central"/>
</dbReference>
<dbReference type="GO" id="GO:0140900">
    <property type="term" value="F:chloride:bicarbonate antiporter activity"/>
    <property type="evidence" value="ECO:0000314"/>
    <property type="project" value="MGI"/>
</dbReference>
<dbReference type="GO" id="GO:0042802">
    <property type="term" value="F:identical protein binding"/>
    <property type="evidence" value="ECO:0000353"/>
    <property type="project" value="IntAct"/>
</dbReference>
<dbReference type="GO" id="GO:0015701">
    <property type="term" value="P:bicarbonate transport"/>
    <property type="evidence" value="ECO:0000314"/>
    <property type="project" value="MGI"/>
</dbReference>
<dbReference type="GO" id="GO:0006821">
    <property type="term" value="P:chloride transport"/>
    <property type="evidence" value="ECO:0000314"/>
    <property type="project" value="MGI"/>
</dbReference>
<dbReference type="GO" id="GO:0006820">
    <property type="term" value="P:monoatomic anion transport"/>
    <property type="evidence" value="ECO:0000314"/>
    <property type="project" value="UniProtKB"/>
</dbReference>
<dbReference type="GO" id="GO:0006885">
    <property type="term" value="P:regulation of pH"/>
    <property type="evidence" value="ECO:0000314"/>
    <property type="project" value="MGI"/>
</dbReference>
<dbReference type="CDD" id="cd07042">
    <property type="entry name" value="STAS_SulP_like_sulfate_transporter"/>
    <property type="match status" value="1"/>
</dbReference>
<dbReference type="Gene3D" id="3.30.750.24">
    <property type="entry name" value="STAS domain"/>
    <property type="match status" value="1"/>
</dbReference>
<dbReference type="InterPro" id="IPR011547">
    <property type="entry name" value="SLC26A/SulP_dom"/>
</dbReference>
<dbReference type="InterPro" id="IPR001902">
    <property type="entry name" value="SLC26A/SulP_fam"/>
</dbReference>
<dbReference type="InterPro" id="IPR002645">
    <property type="entry name" value="STAS_dom"/>
</dbReference>
<dbReference type="InterPro" id="IPR036513">
    <property type="entry name" value="STAS_dom_sf"/>
</dbReference>
<dbReference type="NCBIfam" id="TIGR00815">
    <property type="entry name" value="sulP"/>
    <property type="match status" value="1"/>
</dbReference>
<dbReference type="PANTHER" id="PTHR11814">
    <property type="entry name" value="SULFATE TRANSPORTER"/>
    <property type="match status" value="1"/>
</dbReference>
<dbReference type="Pfam" id="PF01740">
    <property type="entry name" value="STAS"/>
    <property type="match status" value="1"/>
</dbReference>
<dbReference type="Pfam" id="PF00916">
    <property type="entry name" value="Sulfate_transp"/>
    <property type="match status" value="1"/>
</dbReference>
<dbReference type="SUPFAM" id="SSF52091">
    <property type="entry name" value="SpoIIaa-like"/>
    <property type="match status" value="1"/>
</dbReference>
<dbReference type="PROSITE" id="PS50801">
    <property type="entry name" value="STAS"/>
    <property type="match status" value="1"/>
</dbReference>